<dbReference type="EC" id="2.1.1.107" evidence="1"/>
<dbReference type="EC" id="1.3.1.76" evidence="1"/>
<dbReference type="EC" id="4.99.1.4" evidence="1"/>
<dbReference type="EMBL" id="CP000746">
    <property type="protein sequence ID" value="ABR75043.1"/>
    <property type="molecule type" value="Genomic_DNA"/>
</dbReference>
<dbReference type="RefSeq" id="WP_012073420.1">
    <property type="nucleotide sequence ID" value="NC_009655.1"/>
</dbReference>
<dbReference type="SMR" id="A6VPZ6"/>
<dbReference type="STRING" id="339671.Asuc_1691"/>
<dbReference type="KEGG" id="asu:Asuc_1691"/>
<dbReference type="eggNOG" id="COG0007">
    <property type="taxonomic scope" value="Bacteria"/>
</dbReference>
<dbReference type="eggNOG" id="COG1648">
    <property type="taxonomic scope" value="Bacteria"/>
</dbReference>
<dbReference type="HOGENOM" id="CLU_011276_2_0_6"/>
<dbReference type="OrthoDB" id="9815856at2"/>
<dbReference type="UniPathway" id="UPA00148">
    <property type="reaction ID" value="UER00211"/>
</dbReference>
<dbReference type="UniPathway" id="UPA00148">
    <property type="reaction ID" value="UER00222"/>
</dbReference>
<dbReference type="UniPathway" id="UPA00262">
    <property type="reaction ID" value="UER00211"/>
</dbReference>
<dbReference type="UniPathway" id="UPA00262">
    <property type="reaction ID" value="UER00222"/>
</dbReference>
<dbReference type="UniPathway" id="UPA00262">
    <property type="reaction ID" value="UER00376"/>
</dbReference>
<dbReference type="Proteomes" id="UP000001114">
    <property type="component" value="Chromosome"/>
</dbReference>
<dbReference type="GO" id="GO:0051287">
    <property type="term" value="F:NAD binding"/>
    <property type="evidence" value="ECO:0007669"/>
    <property type="project" value="InterPro"/>
</dbReference>
<dbReference type="GO" id="GO:0043115">
    <property type="term" value="F:precorrin-2 dehydrogenase activity"/>
    <property type="evidence" value="ECO:0007669"/>
    <property type="project" value="UniProtKB-UniRule"/>
</dbReference>
<dbReference type="GO" id="GO:0051266">
    <property type="term" value="F:sirohydrochlorin ferrochelatase activity"/>
    <property type="evidence" value="ECO:0007669"/>
    <property type="project" value="UniProtKB-EC"/>
</dbReference>
<dbReference type="GO" id="GO:0004851">
    <property type="term" value="F:uroporphyrin-III C-methyltransferase activity"/>
    <property type="evidence" value="ECO:0007669"/>
    <property type="project" value="UniProtKB-UniRule"/>
</dbReference>
<dbReference type="GO" id="GO:0009236">
    <property type="term" value="P:cobalamin biosynthetic process"/>
    <property type="evidence" value="ECO:0007669"/>
    <property type="project" value="UniProtKB-UniRule"/>
</dbReference>
<dbReference type="GO" id="GO:0032259">
    <property type="term" value="P:methylation"/>
    <property type="evidence" value="ECO:0007669"/>
    <property type="project" value="UniProtKB-KW"/>
</dbReference>
<dbReference type="GO" id="GO:0019354">
    <property type="term" value="P:siroheme biosynthetic process"/>
    <property type="evidence" value="ECO:0007669"/>
    <property type="project" value="UniProtKB-UniRule"/>
</dbReference>
<dbReference type="CDD" id="cd11642">
    <property type="entry name" value="SUMT"/>
    <property type="match status" value="1"/>
</dbReference>
<dbReference type="FunFam" id="3.30.160.110:FF:000001">
    <property type="entry name" value="Siroheme synthase"/>
    <property type="match status" value="1"/>
</dbReference>
<dbReference type="FunFam" id="3.30.950.10:FF:000001">
    <property type="entry name" value="Siroheme synthase"/>
    <property type="match status" value="1"/>
</dbReference>
<dbReference type="FunFam" id="3.40.1010.10:FF:000001">
    <property type="entry name" value="Siroheme synthase"/>
    <property type="match status" value="1"/>
</dbReference>
<dbReference type="Gene3D" id="3.40.1010.10">
    <property type="entry name" value="Cobalt-precorrin-4 Transmethylase, Domain 1"/>
    <property type="match status" value="1"/>
</dbReference>
<dbReference type="Gene3D" id="3.30.950.10">
    <property type="entry name" value="Methyltransferase, Cobalt-precorrin-4 Transmethylase, Domain 2"/>
    <property type="match status" value="1"/>
</dbReference>
<dbReference type="Gene3D" id="3.40.50.720">
    <property type="entry name" value="NAD(P)-binding Rossmann-like Domain"/>
    <property type="match status" value="1"/>
</dbReference>
<dbReference type="Gene3D" id="1.10.8.210">
    <property type="entry name" value="Sirohaem synthase, dimerisation domain"/>
    <property type="match status" value="1"/>
</dbReference>
<dbReference type="Gene3D" id="3.30.160.110">
    <property type="entry name" value="Siroheme synthase, domain 2"/>
    <property type="match status" value="1"/>
</dbReference>
<dbReference type="HAMAP" id="MF_01646">
    <property type="entry name" value="Siroheme_synth"/>
    <property type="match status" value="1"/>
</dbReference>
<dbReference type="InterPro" id="IPR000878">
    <property type="entry name" value="4pyrrol_Mease"/>
</dbReference>
<dbReference type="InterPro" id="IPR035996">
    <property type="entry name" value="4pyrrol_Methylase_sf"/>
</dbReference>
<dbReference type="InterPro" id="IPR014777">
    <property type="entry name" value="4pyrrole_Mease_sub1"/>
</dbReference>
<dbReference type="InterPro" id="IPR014776">
    <property type="entry name" value="4pyrrole_Mease_sub2"/>
</dbReference>
<dbReference type="InterPro" id="IPR006366">
    <property type="entry name" value="CobA/CysG_C"/>
</dbReference>
<dbReference type="InterPro" id="IPR036291">
    <property type="entry name" value="NAD(P)-bd_dom_sf"/>
</dbReference>
<dbReference type="InterPro" id="IPR050161">
    <property type="entry name" value="Siro_Cobalamin_biosynth"/>
</dbReference>
<dbReference type="InterPro" id="IPR037115">
    <property type="entry name" value="Sirohaem_synt_dimer_dom_sf"/>
</dbReference>
<dbReference type="InterPro" id="IPR012409">
    <property type="entry name" value="Sirohaem_synth"/>
</dbReference>
<dbReference type="InterPro" id="IPR028281">
    <property type="entry name" value="Sirohaem_synthase_central"/>
</dbReference>
<dbReference type="InterPro" id="IPR019478">
    <property type="entry name" value="Sirohaem_synthase_dimer_dom"/>
</dbReference>
<dbReference type="InterPro" id="IPR006367">
    <property type="entry name" value="Sirohaem_synthase_N"/>
</dbReference>
<dbReference type="InterPro" id="IPR003043">
    <property type="entry name" value="Uropor_MeTrfase_CS"/>
</dbReference>
<dbReference type="NCBIfam" id="TIGR01469">
    <property type="entry name" value="cobA_cysG_Cterm"/>
    <property type="match status" value="1"/>
</dbReference>
<dbReference type="NCBIfam" id="TIGR01470">
    <property type="entry name" value="cysG_Nterm"/>
    <property type="match status" value="1"/>
</dbReference>
<dbReference type="NCBIfam" id="NF004790">
    <property type="entry name" value="PRK06136.1"/>
    <property type="match status" value="1"/>
</dbReference>
<dbReference type="NCBIfam" id="NF007922">
    <property type="entry name" value="PRK10637.1"/>
    <property type="match status" value="1"/>
</dbReference>
<dbReference type="PANTHER" id="PTHR45790:SF1">
    <property type="entry name" value="SIROHEME SYNTHASE"/>
    <property type="match status" value="1"/>
</dbReference>
<dbReference type="PANTHER" id="PTHR45790">
    <property type="entry name" value="SIROHEME SYNTHASE-RELATED"/>
    <property type="match status" value="1"/>
</dbReference>
<dbReference type="Pfam" id="PF10414">
    <property type="entry name" value="CysG_dimeriser"/>
    <property type="match status" value="1"/>
</dbReference>
<dbReference type="Pfam" id="PF13241">
    <property type="entry name" value="NAD_binding_7"/>
    <property type="match status" value="1"/>
</dbReference>
<dbReference type="Pfam" id="PF14824">
    <property type="entry name" value="Sirohm_synth_M"/>
    <property type="match status" value="1"/>
</dbReference>
<dbReference type="Pfam" id="PF00590">
    <property type="entry name" value="TP_methylase"/>
    <property type="match status" value="1"/>
</dbReference>
<dbReference type="PIRSF" id="PIRSF036426">
    <property type="entry name" value="Sirohaem_synth"/>
    <property type="match status" value="1"/>
</dbReference>
<dbReference type="SUPFAM" id="SSF51735">
    <property type="entry name" value="NAD(P)-binding Rossmann-fold domains"/>
    <property type="match status" value="1"/>
</dbReference>
<dbReference type="SUPFAM" id="SSF75615">
    <property type="entry name" value="Siroheme synthase middle domains-like"/>
    <property type="match status" value="1"/>
</dbReference>
<dbReference type="SUPFAM" id="SSF53790">
    <property type="entry name" value="Tetrapyrrole methylase"/>
    <property type="match status" value="1"/>
</dbReference>
<dbReference type="PROSITE" id="PS00839">
    <property type="entry name" value="SUMT_1"/>
    <property type="match status" value="1"/>
</dbReference>
<dbReference type="PROSITE" id="PS00840">
    <property type="entry name" value="SUMT_2"/>
    <property type="match status" value="1"/>
</dbReference>
<proteinExistence type="inferred from homology"/>
<feature type="chain" id="PRO_0000330485" description="Siroheme synthase">
    <location>
        <begin position="1"/>
        <end position="476"/>
    </location>
</feature>
<feature type="region of interest" description="Precorrin-2 dehydrogenase /sirohydrochlorin ferrochelatase" evidence="1">
    <location>
        <begin position="1"/>
        <end position="203"/>
    </location>
</feature>
<feature type="region of interest" description="Uroporphyrinogen-III C-methyltransferase" evidence="1">
    <location>
        <begin position="214"/>
        <end position="476"/>
    </location>
</feature>
<feature type="active site" description="Proton acceptor" evidence="1">
    <location>
        <position position="246"/>
    </location>
</feature>
<feature type="active site" description="Proton donor" evidence="1">
    <location>
        <position position="268"/>
    </location>
</feature>
<feature type="binding site" evidence="1">
    <location>
        <begin position="22"/>
        <end position="23"/>
    </location>
    <ligand>
        <name>NAD(+)</name>
        <dbReference type="ChEBI" id="CHEBI:57540"/>
    </ligand>
</feature>
<feature type="binding site" evidence="1">
    <location>
        <begin position="43"/>
        <end position="44"/>
    </location>
    <ligand>
        <name>NAD(+)</name>
        <dbReference type="ChEBI" id="CHEBI:57540"/>
    </ligand>
</feature>
<feature type="binding site" evidence="1">
    <location>
        <position position="223"/>
    </location>
    <ligand>
        <name>S-adenosyl-L-methionine</name>
        <dbReference type="ChEBI" id="CHEBI:59789"/>
    </ligand>
</feature>
<feature type="binding site" evidence="1">
    <location>
        <begin position="299"/>
        <end position="301"/>
    </location>
    <ligand>
        <name>S-adenosyl-L-methionine</name>
        <dbReference type="ChEBI" id="CHEBI:59789"/>
    </ligand>
</feature>
<feature type="binding site" evidence="1">
    <location>
        <position position="304"/>
    </location>
    <ligand>
        <name>S-adenosyl-L-methionine</name>
        <dbReference type="ChEBI" id="CHEBI:59789"/>
    </ligand>
</feature>
<feature type="binding site" evidence="1">
    <location>
        <begin position="329"/>
        <end position="330"/>
    </location>
    <ligand>
        <name>S-adenosyl-L-methionine</name>
        <dbReference type="ChEBI" id="CHEBI:59789"/>
    </ligand>
</feature>
<feature type="binding site" evidence="1">
    <location>
        <position position="381"/>
    </location>
    <ligand>
        <name>S-adenosyl-L-methionine</name>
        <dbReference type="ChEBI" id="CHEBI:59789"/>
    </ligand>
</feature>
<feature type="binding site" evidence="1">
    <location>
        <position position="410"/>
    </location>
    <ligand>
        <name>S-adenosyl-L-methionine</name>
        <dbReference type="ChEBI" id="CHEBI:59789"/>
    </ligand>
</feature>
<feature type="modified residue" description="Phosphoserine" evidence="1">
    <location>
        <position position="128"/>
    </location>
</feature>
<keyword id="KW-0169">Cobalamin biosynthesis</keyword>
<keyword id="KW-0456">Lyase</keyword>
<keyword id="KW-0489">Methyltransferase</keyword>
<keyword id="KW-0511">Multifunctional enzyme</keyword>
<keyword id="KW-0520">NAD</keyword>
<keyword id="KW-0560">Oxidoreductase</keyword>
<keyword id="KW-0597">Phosphoprotein</keyword>
<keyword id="KW-0627">Porphyrin biosynthesis</keyword>
<keyword id="KW-1185">Reference proteome</keyword>
<keyword id="KW-0949">S-adenosyl-L-methionine</keyword>
<keyword id="KW-0808">Transferase</keyword>
<comment type="function">
    <text evidence="1">Multifunctional enzyme that catalyzes the SAM-dependent methylations of uroporphyrinogen III at position C-2 and C-7 to form precorrin-2 via precorrin-1. Then it catalyzes the NAD-dependent ring dehydrogenation of precorrin-2 to yield sirohydrochlorin. Finally, it catalyzes the ferrochelation of sirohydrochlorin to yield siroheme.</text>
</comment>
<comment type="catalytic activity">
    <reaction evidence="1">
        <text>uroporphyrinogen III + 2 S-adenosyl-L-methionine = precorrin-2 + 2 S-adenosyl-L-homocysteine + H(+)</text>
        <dbReference type="Rhea" id="RHEA:32459"/>
        <dbReference type="ChEBI" id="CHEBI:15378"/>
        <dbReference type="ChEBI" id="CHEBI:57308"/>
        <dbReference type="ChEBI" id="CHEBI:57856"/>
        <dbReference type="ChEBI" id="CHEBI:58827"/>
        <dbReference type="ChEBI" id="CHEBI:59789"/>
        <dbReference type="EC" id="2.1.1.107"/>
    </reaction>
</comment>
<comment type="catalytic activity">
    <reaction evidence="1">
        <text>precorrin-2 + NAD(+) = sirohydrochlorin + NADH + 2 H(+)</text>
        <dbReference type="Rhea" id="RHEA:15613"/>
        <dbReference type="ChEBI" id="CHEBI:15378"/>
        <dbReference type="ChEBI" id="CHEBI:57540"/>
        <dbReference type="ChEBI" id="CHEBI:57945"/>
        <dbReference type="ChEBI" id="CHEBI:58351"/>
        <dbReference type="ChEBI" id="CHEBI:58827"/>
        <dbReference type="EC" id="1.3.1.76"/>
    </reaction>
</comment>
<comment type="catalytic activity">
    <reaction evidence="1">
        <text>siroheme + 2 H(+) = sirohydrochlorin + Fe(2+)</text>
        <dbReference type="Rhea" id="RHEA:24360"/>
        <dbReference type="ChEBI" id="CHEBI:15378"/>
        <dbReference type="ChEBI" id="CHEBI:29033"/>
        <dbReference type="ChEBI" id="CHEBI:58351"/>
        <dbReference type="ChEBI" id="CHEBI:60052"/>
        <dbReference type="EC" id="4.99.1.4"/>
    </reaction>
</comment>
<comment type="pathway">
    <text evidence="1">Cofactor biosynthesis; adenosylcobalamin biosynthesis; precorrin-2 from uroporphyrinogen III: step 1/1.</text>
</comment>
<comment type="pathway">
    <text evidence="1">Cofactor biosynthesis; adenosylcobalamin biosynthesis; sirohydrochlorin from precorrin-2: step 1/1.</text>
</comment>
<comment type="pathway">
    <text evidence="1">Porphyrin-containing compound metabolism; siroheme biosynthesis; precorrin-2 from uroporphyrinogen III: step 1/1.</text>
</comment>
<comment type="pathway">
    <text evidence="1">Porphyrin-containing compound metabolism; siroheme biosynthesis; siroheme from sirohydrochlorin: step 1/1.</text>
</comment>
<comment type="pathway">
    <text evidence="1">Porphyrin-containing compound metabolism; siroheme biosynthesis; sirohydrochlorin from precorrin-2: step 1/1.</text>
</comment>
<comment type="similarity">
    <text evidence="1">In the N-terminal section; belongs to the precorrin-2 dehydrogenase / sirohydrochlorin ferrochelatase family.</text>
</comment>
<comment type="similarity">
    <text evidence="1">In the C-terminal section; belongs to the precorrin methyltransferase family.</text>
</comment>
<reference key="1">
    <citation type="journal article" date="2010" name="BMC Genomics">
        <title>A genomic perspective on the potential of Actinobacillus succinogenes for industrial succinate production.</title>
        <authorList>
            <person name="McKinlay J.B."/>
            <person name="Laivenieks M."/>
            <person name="Schindler B.D."/>
            <person name="McKinlay A.A."/>
            <person name="Siddaramappa S."/>
            <person name="Challacombe J.F."/>
            <person name="Lowry S.R."/>
            <person name="Clum A."/>
            <person name="Lapidus A.L."/>
            <person name="Burkhart K.B."/>
            <person name="Harkins V."/>
            <person name="Vieille C."/>
        </authorList>
    </citation>
    <scope>NUCLEOTIDE SEQUENCE [LARGE SCALE GENOMIC DNA]</scope>
    <source>
        <strain>ATCC 55618 / DSM 22257 / CCUG 43843 / 130Z</strain>
    </source>
</reference>
<protein>
    <recommendedName>
        <fullName evidence="1">Siroheme synthase</fullName>
    </recommendedName>
    <domain>
        <recommendedName>
            <fullName evidence="1">Uroporphyrinogen-III C-methyltransferase</fullName>
            <shortName evidence="1">Urogen III methylase</shortName>
            <ecNumber evidence="1">2.1.1.107</ecNumber>
        </recommendedName>
        <alternativeName>
            <fullName evidence="1">SUMT</fullName>
        </alternativeName>
        <alternativeName>
            <fullName evidence="1">Uroporphyrinogen III methylase</fullName>
            <shortName evidence="1">UROM</shortName>
        </alternativeName>
    </domain>
    <domain>
        <recommendedName>
            <fullName evidence="1">Precorrin-2 dehydrogenase</fullName>
            <ecNumber evidence="1">1.3.1.76</ecNumber>
        </recommendedName>
    </domain>
    <domain>
        <recommendedName>
            <fullName evidence="1">Sirohydrochlorin ferrochelatase</fullName>
            <ecNumber evidence="1">4.99.1.4</ecNumber>
        </recommendedName>
    </domain>
</protein>
<accession>A6VPZ6</accession>
<evidence type="ECO:0000255" key="1">
    <source>
        <dbReference type="HAMAP-Rule" id="MF_01646"/>
    </source>
</evidence>
<organism>
    <name type="scientific">Actinobacillus succinogenes (strain ATCC 55618 / DSM 22257 / CCUG 43843 / 130Z)</name>
    <dbReference type="NCBI Taxonomy" id="339671"/>
    <lineage>
        <taxon>Bacteria</taxon>
        <taxon>Pseudomonadati</taxon>
        <taxon>Pseudomonadota</taxon>
        <taxon>Gammaproteobacteria</taxon>
        <taxon>Pasteurellales</taxon>
        <taxon>Pasteurellaceae</taxon>
        <taxon>Actinobacillus</taxon>
    </lineage>
</organism>
<sequence>MHYFPVFADLNNRPVLVVGGGGVAARKVNLLLKANADVRIVAQKLNAELTALFELGHILWIAGEFNSEQIRNVFLVIAATDDEYLNERVFRVAESQQKLVNVVDDQARCSFIFPSIIDRNPIQVAVSSGGTAPVLARLLREKLEALLPQHLGAMADISGKWRHKVKTKLKTVTERRRFWESLFNGRFSQLLKNRQTEAAKKELELQLDKDYRGGFVSLVGAGPGDAGLLTLKGLQEIQQADVVLYDALVSDEILELVRRDAKLVFVGKRAQGKQVAQENTNALLVKYAQQGKRVVRLKGGDPFVFGRGGEELEVLAERQIPFSVVPGITAAIGATAYAGIPLTHRDYAQSAVFVTGHRKANASDIEWQTLARSNQTLVIYMGTLKAKDIAERLQQFGRAGSTPIAVISQGTQARQKTHIGTLTALAEIAENAPTPALIVVGEVVTLHDKLAWFGEQKFAQKRPHFTLDSLRIESVA</sequence>
<name>CYSG_ACTSZ</name>
<gene>
    <name evidence="1" type="primary">cysG</name>
    <name type="ordered locus">Asuc_1691</name>
</gene>